<comment type="function">
    <text evidence="1">Bifunctional serine/threonine kinase and phosphorylase involved in the regulation of the phosphoenolpyruvate synthase (PEPS) by catalyzing its phosphorylation/dephosphorylation.</text>
</comment>
<comment type="catalytic activity">
    <reaction evidence="1">
        <text>[pyruvate, water dikinase] + ADP = [pyruvate, water dikinase]-phosphate + AMP + H(+)</text>
        <dbReference type="Rhea" id="RHEA:46020"/>
        <dbReference type="Rhea" id="RHEA-COMP:11425"/>
        <dbReference type="Rhea" id="RHEA-COMP:11426"/>
        <dbReference type="ChEBI" id="CHEBI:15378"/>
        <dbReference type="ChEBI" id="CHEBI:43176"/>
        <dbReference type="ChEBI" id="CHEBI:68546"/>
        <dbReference type="ChEBI" id="CHEBI:456215"/>
        <dbReference type="ChEBI" id="CHEBI:456216"/>
        <dbReference type="EC" id="2.7.11.33"/>
    </reaction>
</comment>
<comment type="catalytic activity">
    <reaction evidence="1">
        <text>[pyruvate, water dikinase]-phosphate + phosphate + H(+) = [pyruvate, water dikinase] + diphosphate</text>
        <dbReference type="Rhea" id="RHEA:48580"/>
        <dbReference type="Rhea" id="RHEA-COMP:11425"/>
        <dbReference type="Rhea" id="RHEA-COMP:11426"/>
        <dbReference type="ChEBI" id="CHEBI:15378"/>
        <dbReference type="ChEBI" id="CHEBI:33019"/>
        <dbReference type="ChEBI" id="CHEBI:43176"/>
        <dbReference type="ChEBI" id="CHEBI:43474"/>
        <dbReference type="ChEBI" id="CHEBI:68546"/>
        <dbReference type="EC" id="2.7.4.28"/>
    </reaction>
</comment>
<comment type="similarity">
    <text evidence="1">Belongs to the pyruvate, phosphate/water dikinase regulatory protein family. PSRP subfamily.</text>
</comment>
<organism>
    <name type="scientific">Burkholderia thailandensis (strain ATCC 700388 / DSM 13276 / CCUG 48851 / CIP 106301 / E264)</name>
    <dbReference type="NCBI Taxonomy" id="271848"/>
    <lineage>
        <taxon>Bacteria</taxon>
        <taxon>Pseudomonadati</taxon>
        <taxon>Pseudomonadota</taxon>
        <taxon>Betaproteobacteria</taxon>
        <taxon>Burkholderiales</taxon>
        <taxon>Burkholderiaceae</taxon>
        <taxon>Burkholderia</taxon>
        <taxon>pseudomallei group</taxon>
    </lineage>
</organism>
<feature type="chain" id="PRO_0000316654" description="Putative phosphoenolpyruvate synthase regulatory protein">
    <location>
        <begin position="1"/>
        <end position="271"/>
    </location>
</feature>
<feature type="binding site" evidence="1">
    <location>
        <begin position="151"/>
        <end position="158"/>
    </location>
    <ligand>
        <name>ADP</name>
        <dbReference type="ChEBI" id="CHEBI:456216"/>
    </ligand>
</feature>
<name>PSRP_BURTA</name>
<dbReference type="EC" id="2.7.11.33" evidence="1"/>
<dbReference type="EC" id="2.7.4.28" evidence="1"/>
<dbReference type="EMBL" id="CP000086">
    <property type="protein sequence ID" value="ABC37587.1"/>
    <property type="molecule type" value="Genomic_DNA"/>
</dbReference>
<dbReference type="RefSeq" id="WP_009890467.1">
    <property type="nucleotide sequence ID" value="NZ_CP008785.1"/>
</dbReference>
<dbReference type="SMR" id="Q2SWY2"/>
<dbReference type="GeneID" id="45121771"/>
<dbReference type="KEGG" id="bte:BTH_I2043"/>
<dbReference type="HOGENOM" id="CLU_046206_1_0_4"/>
<dbReference type="Proteomes" id="UP000001930">
    <property type="component" value="Chromosome I"/>
</dbReference>
<dbReference type="GO" id="GO:0043531">
    <property type="term" value="F:ADP binding"/>
    <property type="evidence" value="ECO:0007669"/>
    <property type="project" value="UniProtKB-UniRule"/>
</dbReference>
<dbReference type="GO" id="GO:0005524">
    <property type="term" value="F:ATP binding"/>
    <property type="evidence" value="ECO:0007669"/>
    <property type="project" value="InterPro"/>
</dbReference>
<dbReference type="GO" id="GO:0016776">
    <property type="term" value="F:phosphotransferase activity, phosphate group as acceptor"/>
    <property type="evidence" value="ECO:0007669"/>
    <property type="project" value="UniProtKB-UniRule"/>
</dbReference>
<dbReference type="GO" id="GO:0004674">
    <property type="term" value="F:protein serine/threonine kinase activity"/>
    <property type="evidence" value="ECO:0007669"/>
    <property type="project" value="UniProtKB-UniRule"/>
</dbReference>
<dbReference type="HAMAP" id="MF_01062">
    <property type="entry name" value="PSRP"/>
    <property type="match status" value="1"/>
</dbReference>
<dbReference type="InterPro" id="IPR005177">
    <property type="entry name" value="Kinase-pyrophosphorylase"/>
</dbReference>
<dbReference type="InterPro" id="IPR026530">
    <property type="entry name" value="PSRP"/>
</dbReference>
<dbReference type="NCBIfam" id="NF003742">
    <property type="entry name" value="PRK05339.1"/>
    <property type="match status" value="1"/>
</dbReference>
<dbReference type="PANTHER" id="PTHR31756">
    <property type="entry name" value="PYRUVATE, PHOSPHATE DIKINASE REGULATORY PROTEIN 1, CHLOROPLASTIC"/>
    <property type="match status" value="1"/>
</dbReference>
<dbReference type="PANTHER" id="PTHR31756:SF3">
    <property type="entry name" value="PYRUVATE, PHOSPHATE DIKINASE REGULATORY PROTEIN 1, CHLOROPLASTIC"/>
    <property type="match status" value="1"/>
</dbReference>
<dbReference type="Pfam" id="PF03618">
    <property type="entry name" value="Kinase-PPPase"/>
    <property type="match status" value="1"/>
</dbReference>
<protein>
    <recommendedName>
        <fullName evidence="1">Putative phosphoenolpyruvate synthase regulatory protein</fullName>
        <shortName evidence="1">PEP synthase regulatory protein</shortName>
        <shortName evidence="1">PSRP</shortName>
        <ecNumber evidence="1">2.7.11.33</ecNumber>
        <ecNumber evidence="1">2.7.4.28</ecNumber>
    </recommendedName>
    <alternativeName>
        <fullName evidence="1">Pyruvate, water dikinase regulatory protein</fullName>
    </alternativeName>
</protein>
<keyword id="KW-0418">Kinase</keyword>
<keyword id="KW-0547">Nucleotide-binding</keyword>
<keyword id="KW-0723">Serine/threonine-protein kinase</keyword>
<keyword id="KW-0808">Transferase</keyword>
<gene>
    <name type="ordered locus">BTH_I2043</name>
</gene>
<evidence type="ECO:0000255" key="1">
    <source>
        <dbReference type="HAMAP-Rule" id="MF_01062"/>
    </source>
</evidence>
<proteinExistence type="inferred from homology"/>
<sequence length="271" mass="30749">MLPTVFIVSDGTGITAETFAHSILSQFDQKFRLVRVPFIDSIEKAYGTVQKIDDAAQHDGRRPIVFTTLVDGESNEIVKRSNALVLDMFQRFVEPLEQELQLKSSHAMGRVHQNADTEEYKTRIEAINFSLAHDDGQSNRNLADADVILIGVSRSGKTPTSLYLAMQYGVKAANYPLIPEDFERGKLPTPLHPHRDKLFGLSIDPMRLSEIRNERRPGSKYAAPENCRYEINEAEAMMRREGVKWLSSTHKSIEEIATTILQEIKLERQSY</sequence>
<reference key="1">
    <citation type="journal article" date="2005" name="BMC Genomics">
        <title>Bacterial genome adaptation to niches: divergence of the potential virulence genes in three Burkholderia species of different survival strategies.</title>
        <authorList>
            <person name="Kim H.S."/>
            <person name="Schell M.A."/>
            <person name="Yu Y."/>
            <person name="Ulrich R.L."/>
            <person name="Sarria S.H."/>
            <person name="Nierman W.C."/>
            <person name="DeShazer D."/>
        </authorList>
    </citation>
    <scope>NUCLEOTIDE SEQUENCE [LARGE SCALE GENOMIC DNA]</scope>
    <source>
        <strain>ATCC 700388 / DSM 13276 / CCUG 48851 / CIP 106301 / E264</strain>
    </source>
</reference>
<accession>Q2SWY2</accession>